<dbReference type="EMBL" id="CR378673">
    <property type="protein sequence ID" value="CAG21511.1"/>
    <property type="molecule type" value="Genomic_DNA"/>
</dbReference>
<dbReference type="RefSeq" id="WP_011219765.1">
    <property type="nucleotide sequence ID" value="NC_006370.1"/>
</dbReference>
<dbReference type="SMR" id="Q6LMG6"/>
<dbReference type="STRING" id="298386.PBPRA3205"/>
<dbReference type="KEGG" id="ppr:PBPRA3205"/>
<dbReference type="eggNOG" id="COG4582">
    <property type="taxonomic scope" value="Bacteria"/>
</dbReference>
<dbReference type="HOGENOM" id="CLU_076303_0_0_6"/>
<dbReference type="Proteomes" id="UP000000593">
    <property type="component" value="Chromosome 1"/>
</dbReference>
<dbReference type="GO" id="GO:0032153">
    <property type="term" value="C:cell division site"/>
    <property type="evidence" value="ECO:0007669"/>
    <property type="project" value="TreeGrafter"/>
</dbReference>
<dbReference type="GO" id="GO:0005737">
    <property type="term" value="C:cytoplasm"/>
    <property type="evidence" value="ECO:0007669"/>
    <property type="project" value="UniProtKB-SubCell"/>
</dbReference>
<dbReference type="GO" id="GO:0000917">
    <property type="term" value="P:division septum assembly"/>
    <property type="evidence" value="ECO:0007669"/>
    <property type="project" value="UniProtKB-KW"/>
</dbReference>
<dbReference type="GO" id="GO:0043093">
    <property type="term" value="P:FtsZ-dependent cytokinesis"/>
    <property type="evidence" value="ECO:0007669"/>
    <property type="project" value="UniProtKB-UniRule"/>
</dbReference>
<dbReference type="Gene3D" id="1.10.3900.10">
    <property type="entry name" value="YacF-like"/>
    <property type="match status" value="1"/>
</dbReference>
<dbReference type="Gene3D" id="2.60.440.10">
    <property type="entry name" value="YacF-like domains"/>
    <property type="match status" value="1"/>
</dbReference>
<dbReference type="HAMAP" id="MF_01092">
    <property type="entry name" value="ZapD"/>
    <property type="match status" value="1"/>
</dbReference>
<dbReference type="InterPro" id="IPR009777">
    <property type="entry name" value="ZapD"/>
</dbReference>
<dbReference type="InterPro" id="IPR027462">
    <property type="entry name" value="ZapD_C"/>
</dbReference>
<dbReference type="InterPro" id="IPR036268">
    <property type="entry name" value="ZapD_sf"/>
</dbReference>
<dbReference type="NCBIfam" id="NF003655">
    <property type="entry name" value="PRK05287.1-3"/>
    <property type="match status" value="1"/>
</dbReference>
<dbReference type="NCBIfam" id="NF003656">
    <property type="entry name" value="PRK05287.1-4"/>
    <property type="match status" value="1"/>
</dbReference>
<dbReference type="PANTHER" id="PTHR39455">
    <property type="entry name" value="CELL DIVISION PROTEIN ZAPD"/>
    <property type="match status" value="1"/>
</dbReference>
<dbReference type="PANTHER" id="PTHR39455:SF1">
    <property type="entry name" value="CELL DIVISION PROTEIN ZAPD"/>
    <property type="match status" value="1"/>
</dbReference>
<dbReference type="Pfam" id="PF07072">
    <property type="entry name" value="ZapD"/>
    <property type="match status" value="1"/>
</dbReference>
<dbReference type="SUPFAM" id="SSF160950">
    <property type="entry name" value="YacF-like"/>
    <property type="match status" value="1"/>
</dbReference>
<protein>
    <recommendedName>
        <fullName evidence="1">Cell division protein ZapD</fullName>
    </recommendedName>
    <alternativeName>
        <fullName evidence="1">Z ring-associated protein D</fullName>
    </alternativeName>
</protein>
<feature type="chain" id="PRO_0000211675" description="Cell division protein ZapD">
    <location>
        <begin position="1"/>
        <end position="245"/>
    </location>
</feature>
<keyword id="KW-0131">Cell cycle</keyword>
<keyword id="KW-0132">Cell division</keyword>
<keyword id="KW-0963">Cytoplasm</keyword>
<keyword id="KW-1185">Reference proteome</keyword>
<keyword id="KW-0717">Septation</keyword>
<gene>
    <name evidence="1" type="primary">zapD</name>
    <name type="ordered locus">PBPRA3205</name>
</gene>
<organism>
    <name type="scientific">Photobacterium profundum (strain SS9)</name>
    <dbReference type="NCBI Taxonomy" id="298386"/>
    <lineage>
        <taxon>Bacteria</taxon>
        <taxon>Pseudomonadati</taxon>
        <taxon>Pseudomonadota</taxon>
        <taxon>Gammaproteobacteria</taxon>
        <taxon>Vibrionales</taxon>
        <taxon>Vibrionaceae</taxon>
        <taxon>Photobacterium</taxon>
    </lineage>
</organism>
<reference key="1">
    <citation type="journal article" date="2005" name="Science">
        <title>Life at depth: Photobacterium profundum genome sequence and expression analysis.</title>
        <authorList>
            <person name="Vezzi A."/>
            <person name="Campanaro S."/>
            <person name="D'Angelo M."/>
            <person name="Simonato F."/>
            <person name="Vitulo N."/>
            <person name="Lauro F.M."/>
            <person name="Cestaro A."/>
            <person name="Malacrida G."/>
            <person name="Simionati B."/>
            <person name="Cannata N."/>
            <person name="Romualdi C."/>
            <person name="Bartlett D.H."/>
            <person name="Valle G."/>
        </authorList>
    </citation>
    <scope>NUCLEOTIDE SEQUENCE [LARGE SCALE GENOMIC DNA]</scope>
    <source>
        <strain>ATCC BAA-1253 / SS9</strain>
    </source>
</reference>
<comment type="function">
    <text evidence="1">Cell division factor that enhances FtsZ-ring assembly. Directly interacts with FtsZ and promotes bundling of FtsZ protofilaments, with a reduction in FtsZ GTPase activity.</text>
</comment>
<comment type="subunit">
    <text evidence="1">Interacts with FtsZ.</text>
</comment>
<comment type="subcellular location">
    <subcellularLocation>
        <location evidence="1">Cytoplasm</location>
    </subcellularLocation>
    <text evidence="1">Localizes to mid-cell in an FtsZ-dependent manner.</text>
</comment>
<comment type="similarity">
    <text evidence="1">Belongs to the ZapD family.</text>
</comment>
<accession>Q6LMG6</accession>
<proteinExistence type="inferred from homology"/>
<evidence type="ECO:0000255" key="1">
    <source>
        <dbReference type="HAMAP-Rule" id="MF_01092"/>
    </source>
</evidence>
<sequence length="245" mass="28558">MQTNRFEHPLNEKVRIYLRLEYLIRQMTHASQLSDQWQHQIFFRALFDLLEILDQVQLKTELAKDLEKQRCKLKNWLNIDGVDQNALLELLDSMDMAHHKLIAANRLGQDLRDDRFLSGIKQRFSIPGGSCCFDLPTLHHWLHLPLAHKQNDLSTWLSQLTEMTDALNLWLRFTRESGPFQPQIARAGFFQHTAEDASLLRLQICPSYGVYPMISGHRGRFAIRFIPFEEGATIADTIEFKLAIC</sequence>
<name>ZAPD_PHOPR</name>